<organism>
    <name type="scientific">Cereibacter sphaeroides (strain KD131 / KCTC 12085)</name>
    <name type="common">Rhodobacter sphaeroides</name>
    <dbReference type="NCBI Taxonomy" id="557760"/>
    <lineage>
        <taxon>Bacteria</taxon>
        <taxon>Pseudomonadati</taxon>
        <taxon>Pseudomonadota</taxon>
        <taxon>Alphaproteobacteria</taxon>
        <taxon>Rhodobacterales</taxon>
        <taxon>Paracoccaceae</taxon>
        <taxon>Cereibacter</taxon>
    </lineage>
</organism>
<protein>
    <recommendedName>
        <fullName evidence="1">3-isopropylmalate dehydratase small subunit</fullName>
        <ecNumber evidence="1">4.2.1.33</ecNumber>
    </recommendedName>
    <alternativeName>
        <fullName evidence="1">Alpha-IPM isomerase</fullName>
        <shortName evidence="1">IPMI</shortName>
    </alternativeName>
    <alternativeName>
        <fullName evidence="1">Isopropylmalate isomerase</fullName>
    </alternativeName>
</protein>
<name>LEUD_CERSK</name>
<reference key="1">
    <citation type="journal article" date="2009" name="J. Bacteriol.">
        <title>Complete genome sequence of Rhodobacter sphaeroides KD131.</title>
        <authorList>
            <person name="Lim S.-K."/>
            <person name="Kim S.J."/>
            <person name="Cha S.H."/>
            <person name="Oh Y.-K."/>
            <person name="Rhee H.-J."/>
            <person name="Kim M.-S."/>
            <person name="Lee J.K."/>
        </authorList>
    </citation>
    <scope>NUCLEOTIDE SEQUENCE [LARGE SCALE GENOMIC DNA]</scope>
    <source>
        <strain>KD131 / KCTC 12085</strain>
    </source>
</reference>
<keyword id="KW-0028">Amino-acid biosynthesis</keyword>
<keyword id="KW-0100">Branched-chain amino acid biosynthesis</keyword>
<keyword id="KW-0432">Leucine biosynthesis</keyword>
<keyword id="KW-0456">Lyase</keyword>
<comment type="function">
    <text evidence="1">Catalyzes the isomerization between 2-isopropylmalate and 3-isopropylmalate, via the formation of 2-isopropylmaleate.</text>
</comment>
<comment type="catalytic activity">
    <reaction evidence="1">
        <text>(2R,3S)-3-isopropylmalate = (2S)-2-isopropylmalate</text>
        <dbReference type="Rhea" id="RHEA:32287"/>
        <dbReference type="ChEBI" id="CHEBI:1178"/>
        <dbReference type="ChEBI" id="CHEBI:35121"/>
        <dbReference type="EC" id="4.2.1.33"/>
    </reaction>
</comment>
<comment type="pathway">
    <text evidence="1">Amino-acid biosynthesis; L-leucine biosynthesis; L-leucine from 3-methyl-2-oxobutanoate: step 2/4.</text>
</comment>
<comment type="subunit">
    <text evidence="1">Heterodimer of LeuC and LeuD.</text>
</comment>
<comment type="similarity">
    <text evidence="1">Belongs to the LeuD family. LeuD type 1 subfamily.</text>
</comment>
<accession>B9KMK2</accession>
<proteinExistence type="inferred from homology"/>
<gene>
    <name evidence="1" type="primary">leuD</name>
    <name type="ordered locus">RSKD131_2233</name>
</gene>
<feature type="chain" id="PRO_1000149423" description="3-isopropylmalate dehydratase small subunit">
    <location>
        <begin position="1"/>
        <end position="201"/>
    </location>
</feature>
<evidence type="ECO:0000255" key="1">
    <source>
        <dbReference type="HAMAP-Rule" id="MF_01031"/>
    </source>
</evidence>
<dbReference type="EC" id="4.2.1.33" evidence="1"/>
<dbReference type="EMBL" id="CP001150">
    <property type="protein sequence ID" value="ACM02093.1"/>
    <property type="molecule type" value="Genomic_DNA"/>
</dbReference>
<dbReference type="RefSeq" id="WP_009561653.1">
    <property type="nucleotide sequence ID" value="NC_011963.1"/>
</dbReference>
<dbReference type="SMR" id="B9KMK2"/>
<dbReference type="GeneID" id="67447617"/>
<dbReference type="KEGG" id="rsk:RSKD131_2233"/>
<dbReference type="HOGENOM" id="CLU_081378_0_3_5"/>
<dbReference type="UniPathway" id="UPA00048">
    <property type="reaction ID" value="UER00071"/>
</dbReference>
<dbReference type="GO" id="GO:0009316">
    <property type="term" value="C:3-isopropylmalate dehydratase complex"/>
    <property type="evidence" value="ECO:0007669"/>
    <property type="project" value="InterPro"/>
</dbReference>
<dbReference type="GO" id="GO:0003861">
    <property type="term" value="F:3-isopropylmalate dehydratase activity"/>
    <property type="evidence" value="ECO:0007669"/>
    <property type="project" value="UniProtKB-UniRule"/>
</dbReference>
<dbReference type="GO" id="GO:0009098">
    <property type="term" value="P:L-leucine biosynthetic process"/>
    <property type="evidence" value="ECO:0007669"/>
    <property type="project" value="UniProtKB-UniRule"/>
</dbReference>
<dbReference type="CDD" id="cd01577">
    <property type="entry name" value="IPMI_Swivel"/>
    <property type="match status" value="1"/>
</dbReference>
<dbReference type="FunFam" id="3.20.19.10:FF:000003">
    <property type="entry name" value="3-isopropylmalate dehydratase small subunit"/>
    <property type="match status" value="1"/>
</dbReference>
<dbReference type="Gene3D" id="3.20.19.10">
    <property type="entry name" value="Aconitase, domain 4"/>
    <property type="match status" value="1"/>
</dbReference>
<dbReference type="HAMAP" id="MF_01031">
    <property type="entry name" value="LeuD_type1"/>
    <property type="match status" value="1"/>
</dbReference>
<dbReference type="InterPro" id="IPR004431">
    <property type="entry name" value="3-IsopropMal_deHydase_ssu"/>
</dbReference>
<dbReference type="InterPro" id="IPR015928">
    <property type="entry name" value="Aconitase/3IPM_dehydase_swvl"/>
</dbReference>
<dbReference type="InterPro" id="IPR000573">
    <property type="entry name" value="AconitaseA/IPMdHydase_ssu_swvl"/>
</dbReference>
<dbReference type="InterPro" id="IPR033940">
    <property type="entry name" value="IPMI_Swivel"/>
</dbReference>
<dbReference type="InterPro" id="IPR050075">
    <property type="entry name" value="LeuD"/>
</dbReference>
<dbReference type="NCBIfam" id="TIGR00171">
    <property type="entry name" value="leuD"/>
    <property type="match status" value="1"/>
</dbReference>
<dbReference type="NCBIfam" id="NF002458">
    <property type="entry name" value="PRK01641.1"/>
    <property type="match status" value="1"/>
</dbReference>
<dbReference type="PANTHER" id="PTHR43345:SF5">
    <property type="entry name" value="3-ISOPROPYLMALATE DEHYDRATASE SMALL SUBUNIT"/>
    <property type="match status" value="1"/>
</dbReference>
<dbReference type="PANTHER" id="PTHR43345">
    <property type="entry name" value="3-ISOPROPYLMALATE DEHYDRATASE SMALL SUBUNIT 2-RELATED-RELATED"/>
    <property type="match status" value="1"/>
</dbReference>
<dbReference type="Pfam" id="PF00694">
    <property type="entry name" value="Aconitase_C"/>
    <property type="match status" value="1"/>
</dbReference>
<dbReference type="SUPFAM" id="SSF52016">
    <property type="entry name" value="LeuD/IlvD-like"/>
    <property type="match status" value="1"/>
</dbReference>
<sequence length="201" mass="22411">MQEFTKLTGVAAPMPLVNIDTDMIIPKQFLKTIQRSGLGKNLFDEMRYNPDGSEIPEFVLNQPAYRDAQIIVAGDNFGCGSSREHAPWALLDFGIRCVISTSFADIFYNNCFKNGILPIVMPPEVVEVLMEDARRGANARMTVDLEAQTVTTSDGQSFPFQVDSFRRHCLMNGLDDIGLTLEKAASIDGFERDLATLRPWV</sequence>